<protein>
    <recommendedName>
        <fullName>Probable sugar phosphate/phosphate translocator At5g25400</fullName>
    </recommendedName>
</protein>
<keyword id="KW-0472">Membrane</keyword>
<keyword id="KW-1185">Reference proteome</keyword>
<keyword id="KW-0762">Sugar transport</keyword>
<keyword id="KW-0812">Transmembrane</keyword>
<keyword id="KW-1133">Transmembrane helix</keyword>
<keyword id="KW-0813">Transport</keyword>
<name>PT525_ARATH</name>
<sequence>MGKGGSLSEGVIKNIIISYTYVAIWIFLSFTVIVYNKYILDKKMYDWPFPISLTMIHMSFCSTLAFLLIKVFKFVEPVSMSRDTYLRSVVPIGALYSLSLWLSNSAYIYLSVSFIQMLKALMPVAVYSIGVLFKKEGFKSETMMNMLSISFGVAIAAYGEARFDVWGVILQLGAVAFEATRLVMIQILLTSKGITLNPITSLYYVAPCCLAFLFIPWIVVEFPILRDTSSFHFDYLIFGTNSFCAFALNLAVFLLVGKTSALTMNVAGVVKDWLLIAFSWSVIKDTVTPINLFGYGIAFLGVAYYNHAKLQALKAKEAQKTAQQVDEETGRLLEEREGNEGGRKNEPED</sequence>
<proteinExistence type="evidence at transcript level"/>
<accession>Q3E6T0</accession>
<organism>
    <name type="scientific">Arabidopsis thaliana</name>
    <name type="common">Mouse-ear cress</name>
    <dbReference type="NCBI Taxonomy" id="3702"/>
    <lineage>
        <taxon>Eukaryota</taxon>
        <taxon>Viridiplantae</taxon>
        <taxon>Streptophyta</taxon>
        <taxon>Embryophyta</taxon>
        <taxon>Tracheophyta</taxon>
        <taxon>Spermatophyta</taxon>
        <taxon>Magnoliopsida</taxon>
        <taxon>eudicotyledons</taxon>
        <taxon>Gunneridae</taxon>
        <taxon>Pentapetalae</taxon>
        <taxon>rosids</taxon>
        <taxon>malvids</taxon>
        <taxon>Brassicales</taxon>
        <taxon>Brassicaceae</taxon>
        <taxon>Camelineae</taxon>
        <taxon>Arabidopsis</taxon>
    </lineage>
</organism>
<gene>
    <name type="ordered locus">At5g25400</name>
    <name type="ORF">F18G18.140</name>
</gene>
<reference key="1">
    <citation type="journal article" date="2000" name="Nature">
        <title>Sequence and analysis of chromosome 5 of the plant Arabidopsis thaliana.</title>
        <authorList>
            <person name="Tabata S."/>
            <person name="Kaneko T."/>
            <person name="Nakamura Y."/>
            <person name="Kotani H."/>
            <person name="Kato T."/>
            <person name="Asamizu E."/>
            <person name="Miyajima N."/>
            <person name="Sasamoto S."/>
            <person name="Kimura T."/>
            <person name="Hosouchi T."/>
            <person name="Kawashima K."/>
            <person name="Kohara M."/>
            <person name="Matsumoto M."/>
            <person name="Matsuno A."/>
            <person name="Muraki A."/>
            <person name="Nakayama S."/>
            <person name="Nakazaki N."/>
            <person name="Naruo K."/>
            <person name="Okumura S."/>
            <person name="Shinpo S."/>
            <person name="Takeuchi C."/>
            <person name="Wada T."/>
            <person name="Watanabe A."/>
            <person name="Yamada M."/>
            <person name="Yasuda M."/>
            <person name="Sato S."/>
            <person name="de la Bastide M."/>
            <person name="Huang E."/>
            <person name="Spiegel L."/>
            <person name="Gnoj L."/>
            <person name="O'Shaughnessy A."/>
            <person name="Preston R."/>
            <person name="Habermann K."/>
            <person name="Murray J."/>
            <person name="Johnson D."/>
            <person name="Rohlfing T."/>
            <person name="Nelson J."/>
            <person name="Stoneking T."/>
            <person name="Pepin K."/>
            <person name="Spieth J."/>
            <person name="Sekhon M."/>
            <person name="Armstrong J."/>
            <person name="Becker M."/>
            <person name="Belter E."/>
            <person name="Cordum H."/>
            <person name="Cordes M."/>
            <person name="Courtney L."/>
            <person name="Courtney W."/>
            <person name="Dante M."/>
            <person name="Du H."/>
            <person name="Edwards J."/>
            <person name="Fryman J."/>
            <person name="Haakensen B."/>
            <person name="Lamar E."/>
            <person name="Latreille P."/>
            <person name="Leonard S."/>
            <person name="Meyer R."/>
            <person name="Mulvaney E."/>
            <person name="Ozersky P."/>
            <person name="Riley A."/>
            <person name="Strowmatt C."/>
            <person name="Wagner-McPherson C."/>
            <person name="Wollam A."/>
            <person name="Yoakum M."/>
            <person name="Bell M."/>
            <person name="Dedhia N."/>
            <person name="Parnell L."/>
            <person name="Shah R."/>
            <person name="Rodriguez M."/>
            <person name="Hoon See L."/>
            <person name="Vil D."/>
            <person name="Baker J."/>
            <person name="Kirchoff K."/>
            <person name="Toth K."/>
            <person name="King L."/>
            <person name="Bahret A."/>
            <person name="Miller B."/>
            <person name="Marra M.A."/>
            <person name="Martienssen R."/>
            <person name="McCombie W.R."/>
            <person name="Wilson R.K."/>
            <person name="Murphy G."/>
            <person name="Bancroft I."/>
            <person name="Volckaert G."/>
            <person name="Wambutt R."/>
            <person name="Duesterhoeft A."/>
            <person name="Stiekema W."/>
            <person name="Pohl T."/>
            <person name="Entian K.-D."/>
            <person name="Terryn N."/>
            <person name="Hartley N."/>
            <person name="Bent E."/>
            <person name="Johnson S."/>
            <person name="Langham S.-A."/>
            <person name="McCullagh B."/>
            <person name="Robben J."/>
            <person name="Grymonprez B."/>
            <person name="Zimmermann W."/>
            <person name="Ramsperger U."/>
            <person name="Wedler H."/>
            <person name="Balke K."/>
            <person name="Wedler E."/>
            <person name="Peters S."/>
            <person name="van Staveren M."/>
            <person name="Dirkse W."/>
            <person name="Mooijman P."/>
            <person name="Klein Lankhorst R."/>
            <person name="Weitzenegger T."/>
            <person name="Bothe G."/>
            <person name="Rose M."/>
            <person name="Hauf J."/>
            <person name="Berneiser S."/>
            <person name="Hempel S."/>
            <person name="Feldpausch M."/>
            <person name="Lamberth S."/>
            <person name="Villarroel R."/>
            <person name="Gielen J."/>
            <person name="Ardiles W."/>
            <person name="Bents O."/>
            <person name="Lemcke K."/>
            <person name="Kolesov G."/>
            <person name="Mayer K.F.X."/>
            <person name="Rudd S."/>
            <person name="Schoof H."/>
            <person name="Schueller C."/>
            <person name="Zaccaria P."/>
            <person name="Mewes H.-W."/>
            <person name="Bevan M."/>
            <person name="Fransz P.F."/>
        </authorList>
    </citation>
    <scope>NUCLEOTIDE SEQUENCE [LARGE SCALE GENOMIC DNA]</scope>
    <source>
        <strain>cv. Columbia</strain>
    </source>
</reference>
<reference key="2">
    <citation type="journal article" date="2017" name="Plant J.">
        <title>Araport11: a complete reannotation of the Arabidopsis thaliana reference genome.</title>
        <authorList>
            <person name="Cheng C.Y."/>
            <person name="Krishnakumar V."/>
            <person name="Chan A.P."/>
            <person name="Thibaud-Nissen F."/>
            <person name="Schobel S."/>
            <person name="Town C.D."/>
        </authorList>
    </citation>
    <scope>GENOME REANNOTATION</scope>
    <source>
        <strain>cv. Columbia</strain>
    </source>
</reference>
<reference key="3">
    <citation type="journal article" date="2014" name="Proc. Natl. Acad. Sci. U.S.A.">
        <title>The Golgi localized bifunctional UDP-rhamnose/UDP-galactose transporter family of Arabidopsis.</title>
        <authorList>
            <person name="Rautengarten C."/>
            <person name="Ebert B."/>
            <person name="Moreno I."/>
            <person name="Temple H."/>
            <person name="Herter T."/>
            <person name="Link B."/>
            <person name="Donas-Cofre D."/>
            <person name="Moreno A."/>
            <person name="Saez-Aguayo S."/>
            <person name="Blanco F."/>
            <person name="Mortimer J.C."/>
            <person name="Schultink A."/>
            <person name="Reiter W.D."/>
            <person name="Dupree P."/>
            <person name="Pauly M."/>
            <person name="Heazlewood J.L."/>
            <person name="Scheller H.V."/>
            <person name="Orellana A."/>
        </authorList>
    </citation>
    <scope>GENE FAMILY</scope>
</reference>
<comment type="subcellular location">
    <subcellularLocation>
        <location evidence="3">Membrane</location>
        <topology evidence="3">Multi-pass membrane protein</topology>
    </subcellularLocation>
</comment>
<comment type="similarity">
    <text evidence="3">Belongs to the TPT transporter family. TPT (TC 2.A.7.9) subfamily.</text>
</comment>
<evidence type="ECO:0000255" key="1"/>
<evidence type="ECO:0000256" key="2">
    <source>
        <dbReference type="SAM" id="MobiDB-lite"/>
    </source>
</evidence>
<evidence type="ECO:0000305" key="3"/>
<dbReference type="EMBL" id="AC006258">
    <property type="status" value="NOT_ANNOTATED_CDS"/>
    <property type="molecule type" value="Genomic_DNA"/>
</dbReference>
<dbReference type="EMBL" id="CP002688">
    <property type="protein sequence ID" value="AED93436.1"/>
    <property type="molecule type" value="Genomic_DNA"/>
</dbReference>
<dbReference type="RefSeq" id="NP_568469.1">
    <property type="nucleotide sequence ID" value="NM_122449.2"/>
</dbReference>
<dbReference type="SMR" id="Q3E6T0"/>
<dbReference type="STRING" id="3702.Q3E6T0"/>
<dbReference type="PaxDb" id="3702-AT5G25400.1"/>
<dbReference type="ProteomicsDB" id="248676"/>
<dbReference type="EnsemblPlants" id="AT5G25400.1">
    <property type="protein sequence ID" value="AT5G25400.1"/>
    <property type="gene ID" value="AT5G25400"/>
</dbReference>
<dbReference type="GeneID" id="832612"/>
<dbReference type="Gramene" id="AT5G25400.1">
    <property type="protein sequence ID" value="AT5G25400.1"/>
    <property type="gene ID" value="AT5G25400"/>
</dbReference>
<dbReference type="KEGG" id="ath:AT5G25400"/>
<dbReference type="Araport" id="AT5G25400"/>
<dbReference type="TAIR" id="AT5G25400"/>
<dbReference type="eggNOG" id="KOG1441">
    <property type="taxonomic scope" value="Eukaryota"/>
</dbReference>
<dbReference type="HOGENOM" id="CLU_022332_3_0_1"/>
<dbReference type="InParanoid" id="Q3E6T0"/>
<dbReference type="OMA" id="VVMIQVM"/>
<dbReference type="PhylomeDB" id="Q3E6T0"/>
<dbReference type="PRO" id="PR:Q3E6T0"/>
<dbReference type="Proteomes" id="UP000006548">
    <property type="component" value="Chromosome 5"/>
</dbReference>
<dbReference type="ExpressionAtlas" id="Q3E6T0">
    <property type="expression patterns" value="baseline and differential"/>
</dbReference>
<dbReference type="GO" id="GO:0005794">
    <property type="term" value="C:Golgi apparatus"/>
    <property type="evidence" value="ECO:0000314"/>
    <property type="project" value="TAIR"/>
</dbReference>
<dbReference type="GO" id="GO:0016020">
    <property type="term" value="C:membrane"/>
    <property type="evidence" value="ECO:0007669"/>
    <property type="project" value="UniProtKB-SubCell"/>
</dbReference>
<dbReference type="GO" id="GO:0015780">
    <property type="term" value="P:nucleotide-sugar transmembrane transport"/>
    <property type="evidence" value="ECO:0000314"/>
    <property type="project" value="TAIR"/>
</dbReference>
<dbReference type="InterPro" id="IPR004853">
    <property type="entry name" value="Sugar_P_trans_dom"/>
</dbReference>
<dbReference type="InterPro" id="IPR050186">
    <property type="entry name" value="TPT_transporter"/>
</dbReference>
<dbReference type="PANTHER" id="PTHR11132">
    <property type="entry name" value="SOLUTE CARRIER FAMILY 35"/>
    <property type="match status" value="1"/>
</dbReference>
<dbReference type="Pfam" id="PF03151">
    <property type="entry name" value="TPT"/>
    <property type="match status" value="1"/>
</dbReference>
<dbReference type="SUPFAM" id="SSF103481">
    <property type="entry name" value="Multidrug resistance efflux transporter EmrE"/>
    <property type="match status" value="1"/>
</dbReference>
<feature type="chain" id="PRO_0000406118" description="Probable sugar phosphate/phosphate translocator At5g25400">
    <location>
        <begin position="1"/>
        <end position="349"/>
    </location>
</feature>
<feature type="transmembrane region" description="Helical" evidence="1">
    <location>
        <begin position="15"/>
        <end position="35"/>
    </location>
</feature>
<feature type="transmembrane region" description="Helical" evidence="1">
    <location>
        <begin position="49"/>
        <end position="69"/>
    </location>
</feature>
<feature type="transmembrane region" description="Helical" evidence="1">
    <location>
        <begin position="89"/>
        <end position="109"/>
    </location>
</feature>
<feature type="transmembrane region" description="Helical" evidence="1">
    <location>
        <begin position="113"/>
        <end position="133"/>
    </location>
</feature>
<feature type="transmembrane region" description="Helical" evidence="1">
    <location>
        <begin position="141"/>
        <end position="161"/>
    </location>
</feature>
<feature type="transmembrane region" description="Helical" evidence="1">
    <location>
        <begin position="165"/>
        <end position="185"/>
    </location>
</feature>
<feature type="transmembrane region" description="Helical" evidence="1">
    <location>
        <begin position="205"/>
        <end position="225"/>
    </location>
</feature>
<feature type="transmembrane region" description="Helical" evidence="1">
    <location>
        <begin position="236"/>
        <end position="256"/>
    </location>
</feature>
<feature type="transmembrane region" description="Helical" evidence="1">
    <location>
        <begin position="263"/>
        <end position="283"/>
    </location>
</feature>
<feature type="transmembrane region" description="Helical" evidence="1">
    <location>
        <begin position="286"/>
        <end position="306"/>
    </location>
</feature>
<feature type="domain" description="EamA">
    <location>
        <begin position="38"/>
        <end position="156"/>
    </location>
</feature>
<feature type="region of interest" description="Disordered" evidence="2">
    <location>
        <begin position="321"/>
        <end position="349"/>
    </location>
</feature>
<feature type="compositionally biased region" description="Basic and acidic residues" evidence="2">
    <location>
        <begin position="328"/>
        <end position="349"/>
    </location>
</feature>